<sequence length="428" mass="46063">MSAIVDIFAREILDSRGNPTVECDVLLESGVMGRAAVPSGASTGQKEALELRDGDKSRYSGKGVLKAVEHVNNQIAQALIGIDASEQSYIDQIMIELDGTENKGNLGANATLAVSMAVARAAAEDAGLPLYRYLGGAGPMSLPVPMMNVINGGEHANNSLNIQEFMIMPVGAKSFREALRCGAEIFHALKKLCDSKGFPTTVGDEGGFAPNLNSHKEALQLMVEATEAAGYKAGEDVLFALDCASSEFYKDGKYHLEAEGRSYTNAEFAEYLESLVNEFPIISIEDGMDENDWEGWKLLTEKLGGKVQLVGDDLFVTNPKILAEGIEKGVANALLVKVNQIGTLSETLKAVDLAKRNRYASVMSHRSGETEDSTIADLAVATNCMQIKTGSLSRSDRMAKYNQLLRIEEELAEAADYPGKAAFYQLGK</sequence>
<proteinExistence type="inferred from homology"/>
<reference key="1">
    <citation type="journal article" date="2007" name="PLoS Genet.">
        <title>Meningococcal genetic variation mechanisms viewed through comparative analysis of serogroup C strain FAM18.</title>
        <authorList>
            <person name="Bentley S.D."/>
            <person name="Vernikos G.S."/>
            <person name="Snyder L.A.S."/>
            <person name="Churcher C."/>
            <person name="Arrowsmith C."/>
            <person name="Chillingworth T."/>
            <person name="Cronin A."/>
            <person name="Davis P.H."/>
            <person name="Holroyd N.E."/>
            <person name="Jagels K."/>
            <person name="Maddison M."/>
            <person name="Moule S."/>
            <person name="Rabbinowitsch E."/>
            <person name="Sharp S."/>
            <person name="Unwin L."/>
            <person name="Whitehead S."/>
            <person name="Quail M.A."/>
            <person name="Achtman M."/>
            <person name="Barrell B.G."/>
            <person name="Saunders N.J."/>
            <person name="Parkhill J."/>
        </authorList>
    </citation>
    <scope>NUCLEOTIDE SEQUENCE [LARGE SCALE GENOMIC DNA]</scope>
    <source>
        <strain>ATCC 700532 / DSM 15464 / FAM18</strain>
    </source>
</reference>
<dbReference type="EC" id="4.2.1.11" evidence="1"/>
<dbReference type="EMBL" id="AM421808">
    <property type="protein sequence ID" value="CAM10458.1"/>
    <property type="molecule type" value="Genomic_DNA"/>
</dbReference>
<dbReference type="RefSeq" id="WP_002220887.1">
    <property type="nucleotide sequence ID" value="NC_008767.1"/>
</dbReference>
<dbReference type="SMR" id="A1KUB6"/>
<dbReference type="KEGG" id="nmc:NMC1220"/>
<dbReference type="HOGENOM" id="CLU_031223_2_1_4"/>
<dbReference type="UniPathway" id="UPA00109">
    <property type="reaction ID" value="UER00187"/>
</dbReference>
<dbReference type="Proteomes" id="UP000002286">
    <property type="component" value="Chromosome"/>
</dbReference>
<dbReference type="GO" id="GO:0009986">
    <property type="term" value="C:cell surface"/>
    <property type="evidence" value="ECO:0007669"/>
    <property type="project" value="UniProtKB-SubCell"/>
</dbReference>
<dbReference type="GO" id="GO:0005576">
    <property type="term" value="C:extracellular region"/>
    <property type="evidence" value="ECO:0007669"/>
    <property type="project" value="UniProtKB-SubCell"/>
</dbReference>
<dbReference type="GO" id="GO:0000015">
    <property type="term" value="C:phosphopyruvate hydratase complex"/>
    <property type="evidence" value="ECO:0007669"/>
    <property type="project" value="InterPro"/>
</dbReference>
<dbReference type="GO" id="GO:0000287">
    <property type="term" value="F:magnesium ion binding"/>
    <property type="evidence" value="ECO:0007669"/>
    <property type="project" value="UniProtKB-UniRule"/>
</dbReference>
<dbReference type="GO" id="GO:0004634">
    <property type="term" value="F:phosphopyruvate hydratase activity"/>
    <property type="evidence" value="ECO:0007669"/>
    <property type="project" value="UniProtKB-UniRule"/>
</dbReference>
<dbReference type="GO" id="GO:0006096">
    <property type="term" value="P:glycolytic process"/>
    <property type="evidence" value="ECO:0007669"/>
    <property type="project" value="UniProtKB-UniRule"/>
</dbReference>
<dbReference type="CDD" id="cd03313">
    <property type="entry name" value="enolase"/>
    <property type="match status" value="1"/>
</dbReference>
<dbReference type="FunFam" id="3.20.20.120:FF:000001">
    <property type="entry name" value="Enolase"/>
    <property type="match status" value="1"/>
</dbReference>
<dbReference type="FunFam" id="3.30.390.10:FF:000001">
    <property type="entry name" value="Enolase"/>
    <property type="match status" value="1"/>
</dbReference>
<dbReference type="Gene3D" id="3.20.20.120">
    <property type="entry name" value="Enolase-like C-terminal domain"/>
    <property type="match status" value="1"/>
</dbReference>
<dbReference type="Gene3D" id="3.30.390.10">
    <property type="entry name" value="Enolase-like, N-terminal domain"/>
    <property type="match status" value="1"/>
</dbReference>
<dbReference type="HAMAP" id="MF_00318">
    <property type="entry name" value="Enolase"/>
    <property type="match status" value="1"/>
</dbReference>
<dbReference type="InterPro" id="IPR000941">
    <property type="entry name" value="Enolase"/>
</dbReference>
<dbReference type="InterPro" id="IPR036849">
    <property type="entry name" value="Enolase-like_C_sf"/>
</dbReference>
<dbReference type="InterPro" id="IPR029017">
    <property type="entry name" value="Enolase-like_N"/>
</dbReference>
<dbReference type="InterPro" id="IPR020810">
    <property type="entry name" value="Enolase_C"/>
</dbReference>
<dbReference type="InterPro" id="IPR020809">
    <property type="entry name" value="Enolase_CS"/>
</dbReference>
<dbReference type="InterPro" id="IPR020811">
    <property type="entry name" value="Enolase_N"/>
</dbReference>
<dbReference type="NCBIfam" id="TIGR01060">
    <property type="entry name" value="eno"/>
    <property type="match status" value="1"/>
</dbReference>
<dbReference type="PANTHER" id="PTHR11902">
    <property type="entry name" value="ENOLASE"/>
    <property type="match status" value="1"/>
</dbReference>
<dbReference type="PANTHER" id="PTHR11902:SF1">
    <property type="entry name" value="ENOLASE"/>
    <property type="match status" value="1"/>
</dbReference>
<dbReference type="Pfam" id="PF00113">
    <property type="entry name" value="Enolase_C"/>
    <property type="match status" value="1"/>
</dbReference>
<dbReference type="Pfam" id="PF03952">
    <property type="entry name" value="Enolase_N"/>
    <property type="match status" value="1"/>
</dbReference>
<dbReference type="PIRSF" id="PIRSF001400">
    <property type="entry name" value="Enolase"/>
    <property type="match status" value="1"/>
</dbReference>
<dbReference type="PRINTS" id="PR00148">
    <property type="entry name" value="ENOLASE"/>
</dbReference>
<dbReference type="SFLD" id="SFLDF00002">
    <property type="entry name" value="enolase"/>
    <property type="match status" value="1"/>
</dbReference>
<dbReference type="SFLD" id="SFLDG00178">
    <property type="entry name" value="enolase"/>
    <property type="match status" value="1"/>
</dbReference>
<dbReference type="SMART" id="SM01192">
    <property type="entry name" value="Enolase_C"/>
    <property type="match status" value="1"/>
</dbReference>
<dbReference type="SMART" id="SM01193">
    <property type="entry name" value="Enolase_N"/>
    <property type="match status" value="1"/>
</dbReference>
<dbReference type="SUPFAM" id="SSF51604">
    <property type="entry name" value="Enolase C-terminal domain-like"/>
    <property type="match status" value="1"/>
</dbReference>
<dbReference type="SUPFAM" id="SSF54826">
    <property type="entry name" value="Enolase N-terminal domain-like"/>
    <property type="match status" value="1"/>
</dbReference>
<dbReference type="PROSITE" id="PS00164">
    <property type="entry name" value="ENOLASE"/>
    <property type="match status" value="1"/>
</dbReference>
<gene>
    <name evidence="1" type="primary">eno</name>
    <name type="ordered locus">NMC1220</name>
</gene>
<organism>
    <name type="scientific">Neisseria meningitidis serogroup C / serotype 2a (strain ATCC 700532 / DSM 15464 / FAM18)</name>
    <dbReference type="NCBI Taxonomy" id="272831"/>
    <lineage>
        <taxon>Bacteria</taxon>
        <taxon>Pseudomonadati</taxon>
        <taxon>Pseudomonadota</taxon>
        <taxon>Betaproteobacteria</taxon>
        <taxon>Neisseriales</taxon>
        <taxon>Neisseriaceae</taxon>
        <taxon>Neisseria</taxon>
    </lineage>
</organism>
<comment type="function">
    <text evidence="1">Catalyzes the reversible conversion of 2-phosphoglycerate (2-PG) into phosphoenolpyruvate (PEP). It is essential for the degradation of carbohydrates via glycolysis.</text>
</comment>
<comment type="catalytic activity">
    <reaction evidence="1">
        <text>(2R)-2-phosphoglycerate = phosphoenolpyruvate + H2O</text>
        <dbReference type="Rhea" id="RHEA:10164"/>
        <dbReference type="ChEBI" id="CHEBI:15377"/>
        <dbReference type="ChEBI" id="CHEBI:58289"/>
        <dbReference type="ChEBI" id="CHEBI:58702"/>
        <dbReference type="EC" id="4.2.1.11"/>
    </reaction>
</comment>
<comment type="cofactor">
    <cofactor evidence="1">
        <name>Mg(2+)</name>
        <dbReference type="ChEBI" id="CHEBI:18420"/>
    </cofactor>
    <text evidence="1">Binds a second Mg(2+) ion via substrate during catalysis.</text>
</comment>
<comment type="pathway">
    <text evidence="1">Carbohydrate degradation; glycolysis; pyruvate from D-glyceraldehyde 3-phosphate: step 4/5.</text>
</comment>
<comment type="subcellular location">
    <subcellularLocation>
        <location evidence="1">Cytoplasm</location>
    </subcellularLocation>
    <subcellularLocation>
        <location evidence="1">Secreted</location>
    </subcellularLocation>
    <subcellularLocation>
        <location evidence="1">Cell surface</location>
    </subcellularLocation>
    <text evidence="1">Fractions of enolase are present in both the cytoplasm and on the cell surface.</text>
</comment>
<comment type="similarity">
    <text evidence="1">Belongs to the enolase family.</text>
</comment>
<protein>
    <recommendedName>
        <fullName evidence="1">Enolase</fullName>
        <ecNumber evidence="1">4.2.1.11</ecNumber>
    </recommendedName>
    <alternativeName>
        <fullName evidence="1">2-phospho-D-glycerate hydro-lyase</fullName>
    </alternativeName>
    <alternativeName>
        <fullName evidence="1">2-phosphoglycerate dehydratase</fullName>
    </alternativeName>
</protein>
<keyword id="KW-0963">Cytoplasm</keyword>
<keyword id="KW-0324">Glycolysis</keyword>
<keyword id="KW-0456">Lyase</keyword>
<keyword id="KW-0460">Magnesium</keyword>
<keyword id="KW-0479">Metal-binding</keyword>
<keyword id="KW-0964">Secreted</keyword>
<accession>A1KUB6</accession>
<name>ENO_NEIMF</name>
<feature type="chain" id="PRO_1000019227" description="Enolase">
    <location>
        <begin position="1"/>
        <end position="428"/>
    </location>
</feature>
<feature type="active site" description="Proton donor" evidence="1">
    <location>
        <position position="205"/>
    </location>
</feature>
<feature type="active site" description="Proton acceptor" evidence="1">
    <location>
        <position position="337"/>
    </location>
</feature>
<feature type="binding site" evidence="1">
    <location>
        <position position="163"/>
    </location>
    <ligand>
        <name>(2R)-2-phosphoglycerate</name>
        <dbReference type="ChEBI" id="CHEBI:58289"/>
    </ligand>
</feature>
<feature type="binding site" evidence="1">
    <location>
        <position position="242"/>
    </location>
    <ligand>
        <name>Mg(2+)</name>
        <dbReference type="ChEBI" id="CHEBI:18420"/>
    </ligand>
</feature>
<feature type="binding site" evidence="1">
    <location>
        <position position="285"/>
    </location>
    <ligand>
        <name>Mg(2+)</name>
        <dbReference type="ChEBI" id="CHEBI:18420"/>
    </ligand>
</feature>
<feature type="binding site" evidence="1">
    <location>
        <position position="312"/>
    </location>
    <ligand>
        <name>Mg(2+)</name>
        <dbReference type="ChEBI" id="CHEBI:18420"/>
    </ligand>
</feature>
<feature type="binding site" evidence="1">
    <location>
        <position position="337"/>
    </location>
    <ligand>
        <name>(2R)-2-phosphoglycerate</name>
        <dbReference type="ChEBI" id="CHEBI:58289"/>
    </ligand>
</feature>
<feature type="binding site" evidence="1">
    <location>
        <position position="366"/>
    </location>
    <ligand>
        <name>(2R)-2-phosphoglycerate</name>
        <dbReference type="ChEBI" id="CHEBI:58289"/>
    </ligand>
</feature>
<feature type="binding site" evidence="1">
    <location>
        <position position="367"/>
    </location>
    <ligand>
        <name>(2R)-2-phosphoglycerate</name>
        <dbReference type="ChEBI" id="CHEBI:58289"/>
    </ligand>
</feature>
<feature type="binding site" evidence="1">
    <location>
        <position position="388"/>
    </location>
    <ligand>
        <name>(2R)-2-phosphoglycerate</name>
        <dbReference type="ChEBI" id="CHEBI:58289"/>
    </ligand>
</feature>
<evidence type="ECO:0000255" key="1">
    <source>
        <dbReference type="HAMAP-Rule" id="MF_00318"/>
    </source>
</evidence>